<name>CLPP_JANMA</name>
<dbReference type="EC" id="3.4.21.92" evidence="1"/>
<dbReference type="EMBL" id="CP000269">
    <property type="protein sequence ID" value="ABR89176.1"/>
    <property type="molecule type" value="Genomic_DNA"/>
</dbReference>
<dbReference type="RefSeq" id="WP_012079386.1">
    <property type="nucleotide sequence ID" value="NC_009659.1"/>
</dbReference>
<dbReference type="SMR" id="A6SY74"/>
<dbReference type="STRING" id="375286.mma_1531"/>
<dbReference type="MEROPS" id="S14.001"/>
<dbReference type="KEGG" id="mms:mma_1531"/>
<dbReference type="eggNOG" id="COG0740">
    <property type="taxonomic scope" value="Bacteria"/>
</dbReference>
<dbReference type="HOGENOM" id="CLU_058707_3_2_4"/>
<dbReference type="OrthoDB" id="9802800at2"/>
<dbReference type="Proteomes" id="UP000006388">
    <property type="component" value="Chromosome"/>
</dbReference>
<dbReference type="GO" id="GO:0005737">
    <property type="term" value="C:cytoplasm"/>
    <property type="evidence" value="ECO:0007669"/>
    <property type="project" value="UniProtKB-SubCell"/>
</dbReference>
<dbReference type="GO" id="GO:0009368">
    <property type="term" value="C:endopeptidase Clp complex"/>
    <property type="evidence" value="ECO:0007669"/>
    <property type="project" value="TreeGrafter"/>
</dbReference>
<dbReference type="GO" id="GO:0004176">
    <property type="term" value="F:ATP-dependent peptidase activity"/>
    <property type="evidence" value="ECO:0007669"/>
    <property type="project" value="InterPro"/>
</dbReference>
<dbReference type="GO" id="GO:0051117">
    <property type="term" value="F:ATPase binding"/>
    <property type="evidence" value="ECO:0007669"/>
    <property type="project" value="TreeGrafter"/>
</dbReference>
<dbReference type="GO" id="GO:0004252">
    <property type="term" value="F:serine-type endopeptidase activity"/>
    <property type="evidence" value="ECO:0007669"/>
    <property type="project" value="UniProtKB-UniRule"/>
</dbReference>
<dbReference type="GO" id="GO:0006515">
    <property type="term" value="P:protein quality control for misfolded or incompletely synthesized proteins"/>
    <property type="evidence" value="ECO:0007669"/>
    <property type="project" value="TreeGrafter"/>
</dbReference>
<dbReference type="CDD" id="cd07017">
    <property type="entry name" value="S14_ClpP_2"/>
    <property type="match status" value="1"/>
</dbReference>
<dbReference type="FunFam" id="3.90.226.10:FF:000001">
    <property type="entry name" value="ATP-dependent Clp protease proteolytic subunit"/>
    <property type="match status" value="1"/>
</dbReference>
<dbReference type="Gene3D" id="3.90.226.10">
    <property type="entry name" value="2-enoyl-CoA Hydratase, Chain A, domain 1"/>
    <property type="match status" value="1"/>
</dbReference>
<dbReference type="HAMAP" id="MF_00444">
    <property type="entry name" value="ClpP"/>
    <property type="match status" value="1"/>
</dbReference>
<dbReference type="InterPro" id="IPR001907">
    <property type="entry name" value="ClpP"/>
</dbReference>
<dbReference type="InterPro" id="IPR029045">
    <property type="entry name" value="ClpP/crotonase-like_dom_sf"/>
</dbReference>
<dbReference type="InterPro" id="IPR023562">
    <property type="entry name" value="ClpP/TepA"/>
</dbReference>
<dbReference type="InterPro" id="IPR033135">
    <property type="entry name" value="ClpP_His_AS"/>
</dbReference>
<dbReference type="NCBIfam" id="TIGR00493">
    <property type="entry name" value="clpP"/>
    <property type="match status" value="1"/>
</dbReference>
<dbReference type="NCBIfam" id="NF001368">
    <property type="entry name" value="PRK00277.1"/>
    <property type="match status" value="1"/>
</dbReference>
<dbReference type="NCBIfam" id="NF009205">
    <property type="entry name" value="PRK12553.1"/>
    <property type="match status" value="1"/>
</dbReference>
<dbReference type="PANTHER" id="PTHR10381">
    <property type="entry name" value="ATP-DEPENDENT CLP PROTEASE PROTEOLYTIC SUBUNIT"/>
    <property type="match status" value="1"/>
</dbReference>
<dbReference type="PANTHER" id="PTHR10381:SF70">
    <property type="entry name" value="ATP-DEPENDENT CLP PROTEASE PROTEOLYTIC SUBUNIT"/>
    <property type="match status" value="1"/>
</dbReference>
<dbReference type="Pfam" id="PF00574">
    <property type="entry name" value="CLP_protease"/>
    <property type="match status" value="1"/>
</dbReference>
<dbReference type="PRINTS" id="PR00127">
    <property type="entry name" value="CLPPROTEASEP"/>
</dbReference>
<dbReference type="SUPFAM" id="SSF52096">
    <property type="entry name" value="ClpP/crotonase"/>
    <property type="match status" value="1"/>
</dbReference>
<dbReference type="PROSITE" id="PS00382">
    <property type="entry name" value="CLP_PROTEASE_HIS"/>
    <property type="match status" value="1"/>
</dbReference>
<comment type="function">
    <text evidence="1">Cleaves peptides in various proteins in a process that requires ATP hydrolysis. Has a chymotrypsin-like activity. Plays a major role in the degradation of misfolded proteins.</text>
</comment>
<comment type="catalytic activity">
    <reaction evidence="1">
        <text>Hydrolysis of proteins to small peptides in the presence of ATP and magnesium. alpha-casein is the usual test substrate. In the absence of ATP, only oligopeptides shorter than five residues are hydrolyzed (such as succinyl-Leu-Tyr-|-NHMec, and Leu-Tyr-Leu-|-Tyr-Trp, in which cleavage of the -Tyr-|-Leu- and -Tyr-|-Trp bonds also occurs).</text>
        <dbReference type="EC" id="3.4.21.92"/>
    </reaction>
</comment>
<comment type="subunit">
    <text evidence="1">Fourteen ClpP subunits assemble into 2 heptameric rings which stack back to back to give a disk-like structure with a central cavity, resembling the structure of eukaryotic proteasomes.</text>
</comment>
<comment type="subcellular location">
    <subcellularLocation>
        <location evidence="1">Cytoplasm</location>
    </subcellularLocation>
</comment>
<comment type="similarity">
    <text evidence="1">Belongs to the peptidase S14 family.</text>
</comment>
<keyword id="KW-0963">Cytoplasm</keyword>
<keyword id="KW-0378">Hydrolase</keyword>
<keyword id="KW-0645">Protease</keyword>
<keyword id="KW-0720">Serine protease</keyword>
<proteinExistence type="inferred from homology"/>
<organism>
    <name type="scientific">Janthinobacterium sp. (strain Marseille)</name>
    <name type="common">Minibacterium massiliensis</name>
    <dbReference type="NCBI Taxonomy" id="375286"/>
    <lineage>
        <taxon>Bacteria</taxon>
        <taxon>Pseudomonadati</taxon>
        <taxon>Pseudomonadota</taxon>
        <taxon>Betaproteobacteria</taxon>
        <taxon>Burkholderiales</taxon>
        <taxon>Oxalobacteraceae</taxon>
        <taxon>Janthinobacterium</taxon>
    </lineage>
</organism>
<feature type="chain" id="PRO_1000189649" description="ATP-dependent Clp protease proteolytic subunit">
    <location>
        <begin position="1"/>
        <end position="210"/>
    </location>
</feature>
<feature type="active site" description="Nucleophile" evidence="1">
    <location>
        <position position="114"/>
    </location>
</feature>
<feature type="active site" evidence="1">
    <location>
        <position position="139"/>
    </location>
</feature>
<gene>
    <name evidence="1" type="primary">clpP</name>
    <name type="ordered locus">mma_1531</name>
</gene>
<protein>
    <recommendedName>
        <fullName evidence="1">ATP-dependent Clp protease proteolytic subunit</fullName>
        <ecNumber evidence="1">3.4.21.92</ecNumber>
    </recommendedName>
    <alternativeName>
        <fullName evidence="1">Endopeptidase Clp</fullName>
    </alternativeName>
</protein>
<reference key="1">
    <citation type="journal article" date="2007" name="PLoS Genet.">
        <title>Genome analysis of Minibacterium massiliensis highlights the convergent evolution of water-living bacteria.</title>
        <authorList>
            <person name="Audic S."/>
            <person name="Robert C."/>
            <person name="Campagna B."/>
            <person name="Parinello H."/>
            <person name="Claverie J.-M."/>
            <person name="Raoult D."/>
            <person name="Drancourt M."/>
        </authorList>
    </citation>
    <scope>NUCLEOTIDE SEQUENCE [LARGE SCALE GENOMIC DNA]</scope>
    <source>
        <strain>Marseille</strain>
    </source>
</reference>
<evidence type="ECO:0000255" key="1">
    <source>
        <dbReference type="HAMAP-Rule" id="MF_00444"/>
    </source>
</evidence>
<sequence length="210" mass="22901">MITTSMTRTSALDTDMLGMVPMVIEQSGRGERAYDIYSRLLKERIIFLVGPVNDQMANLIVAQLLFLESENPDKDISLYINSPGGSVSAGMAIYDTMQFIKPNVSTLCTGLAASMGAFLLAAGEKGKRFSLPNSRIMIHQPLGGAQGQASDIEIQAREILYLRERLNAILAERTGKSVEEIAKDTDRDNFMSADAAVTYGMIDKVLATRA</sequence>
<accession>A6SY74</accession>